<sequence>MRQRLTVSESKAIFHKEFPFVVPAVYRRLVDELIVELNLLKNQERFVADGVFAIGLTSIFLDFTKGYKPENQKGILLEAICKCTGFSASNLEQIALEAKKLANGLNTNEIKSLITDNNRDEKESTYKLINKNNHYSRIIAIGIYKLVDMQSNGFNKEEATENSYLDLVNNFGYTKERVEKDVNLYKSSLDKIEKALELIEMNIKDEKRRNKERVSRTKPGQ</sequence>
<comment type="function">
    <text evidence="1">May be involved in photosynthetic membrane biogenesis.</text>
</comment>
<comment type="similarity">
    <text evidence="1">Belongs to the THF1 family.</text>
</comment>
<name>THF1_PROM4</name>
<dbReference type="EMBL" id="CP000878">
    <property type="protein sequence ID" value="ABX08774.1"/>
    <property type="molecule type" value="Genomic_DNA"/>
</dbReference>
<dbReference type="RefSeq" id="WP_012195396.1">
    <property type="nucleotide sequence ID" value="NC_009976.1"/>
</dbReference>
<dbReference type="SMR" id="A9BAB2"/>
<dbReference type="STRING" id="93059.P9211_08431"/>
<dbReference type="KEGG" id="pmj:P9211_08431"/>
<dbReference type="eggNOG" id="ENOG5033PEZ">
    <property type="taxonomic scope" value="Bacteria"/>
</dbReference>
<dbReference type="HOGENOM" id="CLU_079763_1_0_3"/>
<dbReference type="OrthoDB" id="463078at2"/>
<dbReference type="Proteomes" id="UP000000788">
    <property type="component" value="Chromosome"/>
</dbReference>
<dbReference type="GO" id="GO:0030096">
    <property type="term" value="C:plasma membrane-derived thylakoid photosystem II"/>
    <property type="evidence" value="ECO:0007669"/>
    <property type="project" value="TreeGrafter"/>
</dbReference>
<dbReference type="GO" id="GO:0010207">
    <property type="term" value="P:photosystem II assembly"/>
    <property type="evidence" value="ECO:0007669"/>
    <property type="project" value="InterPro"/>
</dbReference>
<dbReference type="HAMAP" id="MF_01843">
    <property type="entry name" value="Thf1"/>
    <property type="match status" value="1"/>
</dbReference>
<dbReference type="InterPro" id="IPR017499">
    <property type="entry name" value="Thf1"/>
</dbReference>
<dbReference type="NCBIfam" id="TIGR03060">
    <property type="entry name" value="PS_II_psb29"/>
    <property type="match status" value="1"/>
</dbReference>
<dbReference type="PANTHER" id="PTHR34793">
    <property type="entry name" value="PROTEIN THYLAKOID FORMATION 1, CHLOROPLASTIC"/>
    <property type="match status" value="1"/>
</dbReference>
<dbReference type="PANTHER" id="PTHR34793:SF1">
    <property type="entry name" value="PROTEIN THYLAKOID FORMATION 1, CHLOROPLASTIC"/>
    <property type="match status" value="1"/>
</dbReference>
<dbReference type="Pfam" id="PF11264">
    <property type="entry name" value="ThylakoidFormat"/>
    <property type="match status" value="1"/>
</dbReference>
<evidence type="ECO:0000255" key="1">
    <source>
        <dbReference type="HAMAP-Rule" id="MF_01843"/>
    </source>
</evidence>
<organism>
    <name type="scientific">Prochlorococcus marinus (strain MIT 9211)</name>
    <dbReference type="NCBI Taxonomy" id="93059"/>
    <lineage>
        <taxon>Bacteria</taxon>
        <taxon>Bacillati</taxon>
        <taxon>Cyanobacteriota</taxon>
        <taxon>Cyanophyceae</taxon>
        <taxon>Synechococcales</taxon>
        <taxon>Prochlorococcaceae</taxon>
        <taxon>Prochlorococcus</taxon>
    </lineage>
</organism>
<reference key="1">
    <citation type="journal article" date="2007" name="PLoS Genet.">
        <title>Patterns and implications of gene gain and loss in the evolution of Prochlorococcus.</title>
        <authorList>
            <person name="Kettler G.C."/>
            <person name="Martiny A.C."/>
            <person name="Huang K."/>
            <person name="Zucker J."/>
            <person name="Coleman M.L."/>
            <person name="Rodrigue S."/>
            <person name="Chen F."/>
            <person name="Lapidus A."/>
            <person name="Ferriera S."/>
            <person name="Johnson J."/>
            <person name="Steglich C."/>
            <person name="Church G.M."/>
            <person name="Richardson P."/>
            <person name="Chisholm S.W."/>
        </authorList>
    </citation>
    <scope>NUCLEOTIDE SEQUENCE [LARGE SCALE GENOMIC DNA]</scope>
    <source>
        <strain>MIT 9211</strain>
    </source>
</reference>
<gene>
    <name evidence="1" type="primary">thf1</name>
    <name type="ordered locus">P9211_08431</name>
</gene>
<accession>A9BAB2</accession>
<protein>
    <recommendedName>
        <fullName evidence="1">Protein Thf1</fullName>
    </recommendedName>
</protein>
<feature type="chain" id="PRO_1000188428" description="Protein Thf1">
    <location>
        <begin position="1"/>
        <end position="221"/>
    </location>
</feature>
<feature type="coiled-coil region" evidence="1">
    <location>
        <begin position="174"/>
        <end position="213"/>
    </location>
</feature>
<keyword id="KW-0175">Coiled coil</keyword>
<keyword id="KW-1185">Reference proteome</keyword>
<proteinExistence type="inferred from homology"/>